<protein>
    <recommendedName>
        <fullName evidence="1">Glycogen synthase 2</fullName>
        <ecNumber evidence="1">2.4.1.21</ecNumber>
    </recommendedName>
    <alternativeName>
        <fullName evidence="1">Starch [bacterial glycogen] synthase 2</fullName>
    </alternativeName>
</protein>
<proteinExistence type="inferred from homology"/>
<dbReference type="EC" id="2.4.1.21" evidence="1"/>
<dbReference type="EMBL" id="AE017180">
    <property type="protein sequence ID" value="AAR36648.1"/>
    <property type="molecule type" value="Genomic_DNA"/>
</dbReference>
<dbReference type="RefSeq" id="NP_954298.1">
    <property type="nucleotide sequence ID" value="NC_002939.5"/>
</dbReference>
<dbReference type="RefSeq" id="WP_010943869.1">
    <property type="nucleotide sequence ID" value="NC_002939.5"/>
</dbReference>
<dbReference type="SMR" id="Q747K8"/>
<dbReference type="FunCoup" id="Q747K8">
    <property type="interactions" value="281"/>
</dbReference>
<dbReference type="STRING" id="243231.GSU3257"/>
<dbReference type="CAZy" id="GT5">
    <property type="family name" value="Glycosyltransferase Family 5"/>
</dbReference>
<dbReference type="EnsemblBacteria" id="AAR36648">
    <property type="protein sequence ID" value="AAR36648"/>
    <property type="gene ID" value="GSU3257"/>
</dbReference>
<dbReference type="KEGG" id="gsu:GSU3257"/>
<dbReference type="PATRIC" id="fig|243231.5.peg.3274"/>
<dbReference type="eggNOG" id="COG0297">
    <property type="taxonomic scope" value="Bacteria"/>
</dbReference>
<dbReference type="HOGENOM" id="CLU_009583_18_5_7"/>
<dbReference type="InParanoid" id="Q747K8"/>
<dbReference type="OrthoDB" id="9808590at2"/>
<dbReference type="UniPathway" id="UPA00164"/>
<dbReference type="Proteomes" id="UP000000577">
    <property type="component" value="Chromosome"/>
</dbReference>
<dbReference type="GO" id="GO:0005829">
    <property type="term" value="C:cytosol"/>
    <property type="evidence" value="ECO:0000318"/>
    <property type="project" value="GO_Central"/>
</dbReference>
<dbReference type="GO" id="GO:0009011">
    <property type="term" value="F:alpha-1,4-glucan glucosyltransferase (ADP-glucose donor) activity"/>
    <property type="evidence" value="ECO:0007669"/>
    <property type="project" value="UniProtKB-UniRule"/>
</dbReference>
<dbReference type="GO" id="GO:0004373">
    <property type="term" value="F:alpha-1,4-glucan glucosyltransferase (UDP-glucose donor) activity"/>
    <property type="evidence" value="ECO:0007669"/>
    <property type="project" value="InterPro"/>
</dbReference>
<dbReference type="GO" id="GO:0005978">
    <property type="term" value="P:glycogen biosynthetic process"/>
    <property type="evidence" value="ECO:0000318"/>
    <property type="project" value="GO_Central"/>
</dbReference>
<dbReference type="CDD" id="cd03791">
    <property type="entry name" value="GT5_Glycogen_synthase_DULL1-like"/>
    <property type="match status" value="1"/>
</dbReference>
<dbReference type="Gene3D" id="3.40.50.2000">
    <property type="entry name" value="Glycogen Phosphorylase B"/>
    <property type="match status" value="2"/>
</dbReference>
<dbReference type="HAMAP" id="MF_00484">
    <property type="entry name" value="Glycogen_synth"/>
    <property type="match status" value="1"/>
</dbReference>
<dbReference type="InterPro" id="IPR001296">
    <property type="entry name" value="Glyco_trans_1"/>
</dbReference>
<dbReference type="InterPro" id="IPR011835">
    <property type="entry name" value="GS/SS"/>
</dbReference>
<dbReference type="InterPro" id="IPR013534">
    <property type="entry name" value="Starch_synth_cat_dom"/>
</dbReference>
<dbReference type="NCBIfam" id="TIGR02095">
    <property type="entry name" value="glgA"/>
    <property type="match status" value="1"/>
</dbReference>
<dbReference type="NCBIfam" id="NF001899">
    <property type="entry name" value="PRK00654.1-2"/>
    <property type="match status" value="1"/>
</dbReference>
<dbReference type="PANTHER" id="PTHR45825:SF11">
    <property type="entry name" value="ALPHA AMYLASE DOMAIN-CONTAINING PROTEIN"/>
    <property type="match status" value="1"/>
</dbReference>
<dbReference type="PANTHER" id="PTHR45825">
    <property type="entry name" value="GRANULE-BOUND STARCH SYNTHASE 1, CHLOROPLASTIC/AMYLOPLASTIC"/>
    <property type="match status" value="1"/>
</dbReference>
<dbReference type="Pfam" id="PF08323">
    <property type="entry name" value="Glyco_transf_5"/>
    <property type="match status" value="1"/>
</dbReference>
<dbReference type="Pfam" id="PF00534">
    <property type="entry name" value="Glycos_transf_1"/>
    <property type="match status" value="1"/>
</dbReference>
<dbReference type="SUPFAM" id="SSF53756">
    <property type="entry name" value="UDP-Glycosyltransferase/glycogen phosphorylase"/>
    <property type="match status" value="1"/>
</dbReference>
<name>GLGA2_GEOSL</name>
<organism>
    <name type="scientific">Geobacter sulfurreducens (strain ATCC 51573 / DSM 12127 / PCA)</name>
    <dbReference type="NCBI Taxonomy" id="243231"/>
    <lineage>
        <taxon>Bacteria</taxon>
        <taxon>Pseudomonadati</taxon>
        <taxon>Thermodesulfobacteriota</taxon>
        <taxon>Desulfuromonadia</taxon>
        <taxon>Geobacterales</taxon>
        <taxon>Geobacteraceae</taxon>
        <taxon>Geobacter</taxon>
    </lineage>
</organism>
<comment type="function">
    <text evidence="1">Synthesizes alpha-1,4-glucan chains using ADP-glucose.</text>
</comment>
<comment type="catalytic activity">
    <reaction evidence="1">
        <text>[(1-&gt;4)-alpha-D-glucosyl](n) + ADP-alpha-D-glucose = [(1-&gt;4)-alpha-D-glucosyl](n+1) + ADP + H(+)</text>
        <dbReference type="Rhea" id="RHEA:18189"/>
        <dbReference type="Rhea" id="RHEA-COMP:9584"/>
        <dbReference type="Rhea" id="RHEA-COMP:9587"/>
        <dbReference type="ChEBI" id="CHEBI:15378"/>
        <dbReference type="ChEBI" id="CHEBI:15444"/>
        <dbReference type="ChEBI" id="CHEBI:57498"/>
        <dbReference type="ChEBI" id="CHEBI:456216"/>
        <dbReference type="EC" id="2.4.1.21"/>
    </reaction>
</comment>
<comment type="pathway">
    <text evidence="1">Glycan biosynthesis; glycogen biosynthesis.</text>
</comment>
<comment type="similarity">
    <text evidence="1">Belongs to the glycosyltransferase 1 family. Bacterial/plant glycogen synthase subfamily.</text>
</comment>
<feature type="chain" id="PRO_0000188618" description="Glycogen synthase 2">
    <location>
        <begin position="1"/>
        <end position="484"/>
    </location>
</feature>
<feature type="binding site" evidence="1">
    <location>
        <position position="15"/>
    </location>
    <ligand>
        <name>ADP-alpha-D-glucose</name>
        <dbReference type="ChEBI" id="CHEBI:57498"/>
    </ligand>
</feature>
<sequence length="484" mass="54142">MKVLMVASEVAPFARTGGLAEVTAALPAALRRMGHDVRVIMPFYRCAAQTELGVRKARKSAEVSLNGETHKGFLRQAALGDVPVYLVENREFFSRDYLYGTPEGDYPDNPRRFAFFCRSVLQFLKRMDFRPDVIHCHDWQTALIPIILRLEAADDPFFARTATVFTIHNLAYQGLFPAPAIAETGLPSALFTTEWLEYYGQLNLMKGAILTADLITTVSETYRREIMTPTQGCGLEGVLARRGDDLFGIVNGIDTDEWNPAADKRIFRNYSARALAGKAADKLELQRELGMPAAPSVPLIGMVSRLAEQKGIDLVLELLPRLAESELQFVLLGTGNACYLERLNSFRSKGAANISINLGFNDPLAPKIYAGSDLFLMPSRFEPCGLSQLIAMRYGTVPVVRHTGGLRDTVVDVTRHPREGTGFTFEDFTADACWEAIERALAGYRDRESWRRIMRRGMHRDVSWHNAAGRYETLYRMAADTRRG</sequence>
<accession>Q747K8</accession>
<reference key="1">
    <citation type="journal article" date="2003" name="Science">
        <title>Genome of Geobacter sulfurreducens: metal reduction in subsurface environments.</title>
        <authorList>
            <person name="Methe B.A."/>
            <person name="Nelson K.E."/>
            <person name="Eisen J.A."/>
            <person name="Paulsen I.T."/>
            <person name="Nelson W.C."/>
            <person name="Heidelberg J.F."/>
            <person name="Wu D."/>
            <person name="Wu M."/>
            <person name="Ward N.L."/>
            <person name="Beanan M.J."/>
            <person name="Dodson R.J."/>
            <person name="Madupu R."/>
            <person name="Brinkac L.M."/>
            <person name="Daugherty S.C."/>
            <person name="DeBoy R.T."/>
            <person name="Durkin A.S."/>
            <person name="Gwinn M.L."/>
            <person name="Kolonay J.F."/>
            <person name="Sullivan S.A."/>
            <person name="Haft D.H."/>
            <person name="Selengut J."/>
            <person name="Davidsen T.M."/>
            <person name="Zafar N."/>
            <person name="White O."/>
            <person name="Tran B."/>
            <person name="Romero C."/>
            <person name="Forberger H.A."/>
            <person name="Weidman J.F."/>
            <person name="Khouri H.M."/>
            <person name="Feldblyum T.V."/>
            <person name="Utterback T.R."/>
            <person name="Van Aken S.E."/>
            <person name="Lovley D.R."/>
            <person name="Fraser C.M."/>
        </authorList>
    </citation>
    <scope>NUCLEOTIDE SEQUENCE [LARGE SCALE GENOMIC DNA]</scope>
    <source>
        <strain>ATCC 51573 / DSM 12127 / PCA</strain>
    </source>
</reference>
<keyword id="KW-0320">Glycogen biosynthesis</keyword>
<keyword id="KW-0328">Glycosyltransferase</keyword>
<keyword id="KW-1185">Reference proteome</keyword>
<keyword id="KW-0808">Transferase</keyword>
<evidence type="ECO:0000255" key="1">
    <source>
        <dbReference type="HAMAP-Rule" id="MF_00484"/>
    </source>
</evidence>
<gene>
    <name evidence="1" type="primary">glgA2</name>
    <name type="synonym">glgA-2</name>
    <name type="ordered locus">GSU3257</name>
</gene>